<keyword id="KW-0067">ATP-binding</keyword>
<keyword id="KW-0143">Chaperone</keyword>
<keyword id="KW-0963">Cytoplasm</keyword>
<keyword id="KW-0547">Nucleotide-binding</keyword>
<keyword id="KW-1185">Reference proteome</keyword>
<accession>Q6BXF6</accession>
<proteinExistence type="inferred from homology"/>
<organism>
    <name type="scientific">Debaryomyces hansenii (strain ATCC 36239 / CBS 767 / BCRC 21394 / JCM 1990 / NBRC 0083 / IGC 2968)</name>
    <name type="common">Yeast</name>
    <name type="synonym">Torulaspora hansenii</name>
    <dbReference type="NCBI Taxonomy" id="284592"/>
    <lineage>
        <taxon>Eukaryota</taxon>
        <taxon>Fungi</taxon>
        <taxon>Dikarya</taxon>
        <taxon>Ascomycota</taxon>
        <taxon>Saccharomycotina</taxon>
        <taxon>Pichiomycetes</taxon>
        <taxon>Debaryomycetaceae</taxon>
        <taxon>Debaryomyces</taxon>
    </lineage>
</organism>
<comment type="function">
    <text evidence="1">Molecular chaperone; assists the folding of proteins upon ATP hydrolysis. Known to play a role, in vitro, in the folding of actin and tubulin (By similarity).</text>
</comment>
<comment type="subunit">
    <text evidence="3">Heterooligomeric complex of about 850 to 900 kDa that forms two stacked rings, 12 to 16 nm in diameter.</text>
</comment>
<comment type="subcellular location">
    <subcellularLocation>
        <location evidence="3">Cytoplasm</location>
    </subcellularLocation>
</comment>
<comment type="similarity">
    <text evidence="3">Belongs to the TCP-1 chaperonin family.</text>
</comment>
<dbReference type="EMBL" id="CR382134">
    <property type="protein sequence ID" value="CAG85104.1"/>
    <property type="molecule type" value="Genomic_DNA"/>
</dbReference>
<dbReference type="RefSeq" id="XP_457113.1">
    <property type="nucleotide sequence ID" value="XM_457113.1"/>
</dbReference>
<dbReference type="SMR" id="Q6BXF6"/>
<dbReference type="FunCoup" id="Q6BXF6">
    <property type="interactions" value="1476"/>
</dbReference>
<dbReference type="STRING" id="284592.Q6BXF6"/>
<dbReference type="GeneID" id="2913124"/>
<dbReference type="KEGG" id="dha:DEHA2B03410g"/>
<dbReference type="VEuPathDB" id="FungiDB:DEHA2B03410g"/>
<dbReference type="eggNOG" id="KOG0358">
    <property type="taxonomic scope" value="Eukaryota"/>
</dbReference>
<dbReference type="HOGENOM" id="CLU_008891_9_1_1"/>
<dbReference type="InParanoid" id="Q6BXF6"/>
<dbReference type="OMA" id="HPAANMI"/>
<dbReference type="OrthoDB" id="10248520at2759"/>
<dbReference type="Proteomes" id="UP000000599">
    <property type="component" value="Chromosome B"/>
</dbReference>
<dbReference type="GO" id="GO:0005832">
    <property type="term" value="C:chaperonin-containing T-complex"/>
    <property type="evidence" value="ECO:0007669"/>
    <property type="project" value="EnsemblFungi"/>
</dbReference>
<dbReference type="GO" id="GO:0005524">
    <property type="term" value="F:ATP binding"/>
    <property type="evidence" value="ECO:0007669"/>
    <property type="project" value="UniProtKB-KW"/>
</dbReference>
<dbReference type="GO" id="GO:0016887">
    <property type="term" value="F:ATP hydrolysis activity"/>
    <property type="evidence" value="ECO:0007669"/>
    <property type="project" value="InterPro"/>
</dbReference>
<dbReference type="GO" id="GO:0140662">
    <property type="term" value="F:ATP-dependent protein folding chaperone"/>
    <property type="evidence" value="ECO:0007669"/>
    <property type="project" value="InterPro"/>
</dbReference>
<dbReference type="GO" id="GO:0051082">
    <property type="term" value="F:unfolded protein binding"/>
    <property type="evidence" value="ECO:0007669"/>
    <property type="project" value="InterPro"/>
</dbReference>
<dbReference type="GO" id="GO:0051086">
    <property type="term" value="P:chaperone mediated protein folding independent of cofactor"/>
    <property type="evidence" value="ECO:0007669"/>
    <property type="project" value="UniProtKB-ARBA"/>
</dbReference>
<dbReference type="CDD" id="cd03338">
    <property type="entry name" value="TCP1_delta"/>
    <property type="match status" value="1"/>
</dbReference>
<dbReference type="FunFam" id="3.50.7.10:FF:000010">
    <property type="entry name" value="T-complex protein 1 subunit delta"/>
    <property type="match status" value="1"/>
</dbReference>
<dbReference type="Gene3D" id="3.50.7.10">
    <property type="entry name" value="GroEL"/>
    <property type="match status" value="1"/>
</dbReference>
<dbReference type="Gene3D" id="1.10.560.10">
    <property type="entry name" value="GroEL-like equatorial domain"/>
    <property type="match status" value="1"/>
</dbReference>
<dbReference type="Gene3D" id="3.30.260.10">
    <property type="entry name" value="TCP-1-like chaperonin intermediate domain"/>
    <property type="match status" value="1"/>
</dbReference>
<dbReference type="InterPro" id="IPR012717">
    <property type="entry name" value="Chap_CCT_delta"/>
</dbReference>
<dbReference type="InterPro" id="IPR017998">
    <property type="entry name" value="Chaperone_TCP-1"/>
</dbReference>
<dbReference type="InterPro" id="IPR002194">
    <property type="entry name" value="Chaperonin_TCP-1_CS"/>
</dbReference>
<dbReference type="InterPro" id="IPR002423">
    <property type="entry name" value="Cpn60/GroEL/TCP-1"/>
</dbReference>
<dbReference type="InterPro" id="IPR027409">
    <property type="entry name" value="GroEL-like_apical_dom_sf"/>
</dbReference>
<dbReference type="InterPro" id="IPR027413">
    <property type="entry name" value="GROEL-like_equatorial_sf"/>
</dbReference>
<dbReference type="InterPro" id="IPR027410">
    <property type="entry name" value="TCP-1-like_intermed_sf"/>
</dbReference>
<dbReference type="InterPro" id="IPR053374">
    <property type="entry name" value="TCP-1_chaperonin"/>
</dbReference>
<dbReference type="InterPro" id="IPR054827">
    <property type="entry name" value="thermosome_alpha"/>
</dbReference>
<dbReference type="NCBIfam" id="TIGR02342">
    <property type="entry name" value="chap_CCT_delta"/>
    <property type="match status" value="1"/>
</dbReference>
<dbReference type="NCBIfam" id="NF041082">
    <property type="entry name" value="thermosome_alpha"/>
    <property type="match status" value="1"/>
</dbReference>
<dbReference type="NCBIfam" id="NF041083">
    <property type="entry name" value="thermosome_beta"/>
    <property type="match status" value="1"/>
</dbReference>
<dbReference type="PANTHER" id="PTHR11353">
    <property type="entry name" value="CHAPERONIN"/>
    <property type="match status" value="1"/>
</dbReference>
<dbReference type="Pfam" id="PF00118">
    <property type="entry name" value="Cpn60_TCP1"/>
    <property type="match status" value="1"/>
</dbReference>
<dbReference type="PRINTS" id="PR00304">
    <property type="entry name" value="TCOMPLEXTCP1"/>
</dbReference>
<dbReference type="SUPFAM" id="SSF52029">
    <property type="entry name" value="GroEL apical domain-like"/>
    <property type="match status" value="1"/>
</dbReference>
<dbReference type="SUPFAM" id="SSF48592">
    <property type="entry name" value="GroEL equatorial domain-like"/>
    <property type="match status" value="1"/>
</dbReference>
<dbReference type="SUPFAM" id="SSF54849">
    <property type="entry name" value="GroEL-intermediate domain like"/>
    <property type="match status" value="1"/>
</dbReference>
<dbReference type="PROSITE" id="PS00750">
    <property type="entry name" value="TCP1_1"/>
    <property type="match status" value="1"/>
</dbReference>
<dbReference type="PROSITE" id="PS00751">
    <property type="entry name" value="TCP1_2"/>
    <property type="match status" value="1"/>
</dbReference>
<dbReference type="PROSITE" id="PS00995">
    <property type="entry name" value="TCP1_3"/>
    <property type="match status" value="1"/>
</dbReference>
<sequence length="533" mass="57629">MAQSQVGKGSPSNATFRDKEKPQEVRKSNILAARAVSDAIRTSLGPKGMDKMIKTKNGEIIISNDGATILKHMAVLHPAARMLVDVSAAQDVEAGDGTTSVAILTGSLLGAAEKLLNKGIHPTLISESFQRAATRSAEVLLEMSHKISLDDKEALIRAASTSLSSKIVSQHSSLLSPLAVNSVLKVMNEEHTNVDLNDIRLIKKVGGTIDETELVNGVVLTQNVVKTAGGPVRVDKAKIALIQFQLSPPKPDMENNVVVNDYRQMDKILKEERAYLLNICKKIKKSKCNVLLIQKSILRDAVNDLALHFLSKLNIMVIKDIERDEIEFLSKATGCKPIADIDNFTEDRLGSADVVEEIESSGSRIVKIDGVSAKNVKPTVSIVCRGANQLVLDETERSIHDALCVVRCLVKEKALIAGGGAPEIEVSRVLMSEANKLSGVEQFVYQEFAQALEVIPTTLAENAGLNSINVVTDLRNRHANGEKNAGISVRRSGASNTYDEHVLQPVLVSSSAITLASECVKSILRIDDIAFSR</sequence>
<name>TCPD_DEBHA</name>
<evidence type="ECO:0000250" key="1"/>
<evidence type="ECO:0000256" key="2">
    <source>
        <dbReference type="SAM" id="MobiDB-lite"/>
    </source>
</evidence>
<evidence type="ECO:0000305" key="3"/>
<reference key="1">
    <citation type="journal article" date="2004" name="Nature">
        <title>Genome evolution in yeasts.</title>
        <authorList>
            <person name="Dujon B."/>
            <person name="Sherman D."/>
            <person name="Fischer G."/>
            <person name="Durrens P."/>
            <person name="Casaregola S."/>
            <person name="Lafontaine I."/>
            <person name="de Montigny J."/>
            <person name="Marck C."/>
            <person name="Neuveglise C."/>
            <person name="Talla E."/>
            <person name="Goffard N."/>
            <person name="Frangeul L."/>
            <person name="Aigle M."/>
            <person name="Anthouard V."/>
            <person name="Babour A."/>
            <person name="Barbe V."/>
            <person name="Barnay S."/>
            <person name="Blanchin S."/>
            <person name="Beckerich J.-M."/>
            <person name="Beyne E."/>
            <person name="Bleykasten C."/>
            <person name="Boisrame A."/>
            <person name="Boyer J."/>
            <person name="Cattolico L."/>
            <person name="Confanioleri F."/>
            <person name="de Daruvar A."/>
            <person name="Despons L."/>
            <person name="Fabre E."/>
            <person name="Fairhead C."/>
            <person name="Ferry-Dumazet H."/>
            <person name="Groppi A."/>
            <person name="Hantraye F."/>
            <person name="Hennequin C."/>
            <person name="Jauniaux N."/>
            <person name="Joyet P."/>
            <person name="Kachouri R."/>
            <person name="Kerrest A."/>
            <person name="Koszul R."/>
            <person name="Lemaire M."/>
            <person name="Lesur I."/>
            <person name="Ma L."/>
            <person name="Muller H."/>
            <person name="Nicaud J.-M."/>
            <person name="Nikolski M."/>
            <person name="Oztas S."/>
            <person name="Ozier-Kalogeropoulos O."/>
            <person name="Pellenz S."/>
            <person name="Potier S."/>
            <person name="Richard G.-F."/>
            <person name="Straub M.-L."/>
            <person name="Suleau A."/>
            <person name="Swennen D."/>
            <person name="Tekaia F."/>
            <person name="Wesolowski-Louvel M."/>
            <person name="Westhof E."/>
            <person name="Wirth B."/>
            <person name="Zeniou-Meyer M."/>
            <person name="Zivanovic Y."/>
            <person name="Bolotin-Fukuhara M."/>
            <person name="Thierry A."/>
            <person name="Bouchier C."/>
            <person name="Caudron B."/>
            <person name="Scarpelli C."/>
            <person name="Gaillardin C."/>
            <person name="Weissenbach J."/>
            <person name="Wincker P."/>
            <person name="Souciet J.-L."/>
        </authorList>
    </citation>
    <scope>NUCLEOTIDE SEQUENCE [LARGE SCALE GENOMIC DNA]</scope>
    <source>
        <strain>ATCC 36239 / CBS 767 / BCRC 21394 / JCM 1990 / NBRC 0083 / IGC 2968</strain>
    </source>
</reference>
<feature type="chain" id="PRO_0000128341" description="T-complex protein 1 subunit delta">
    <location>
        <begin position="1"/>
        <end position="533"/>
    </location>
</feature>
<feature type="region of interest" description="Disordered" evidence="2">
    <location>
        <begin position="1"/>
        <end position="25"/>
    </location>
</feature>
<feature type="compositionally biased region" description="Polar residues" evidence="2">
    <location>
        <begin position="1"/>
        <end position="15"/>
    </location>
</feature>
<feature type="compositionally biased region" description="Basic and acidic residues" evidence="2">
    <location>
        <begin position="16"/>
        <end position="25"/>
    </location>
</feature>
<gene>
    <name type="primary">CCT4</name>
    <name type="ordered locus">DEHA2B03410g</name>
</gene>
<protein>
    <recommendedName>
        <fullName>T-complex protein 1 subunit delta</fullName>
        <shortName>TCP-1-delta</shortName>
    </recommendedName>
    <alternativeName>
        <fullName>CCT-delta</fullName>
    </alternativeName>
</protein>